<proteinExistence type="inferred from homology"/>
<organism>
    <name type="scientific">Acidobacterium capsulatum (strain ATCC 51196 / DSM 11244 / BCRC 80197 / JCM 7670 / NBRC 15755 / NCIMB 13165 / 161)</name>
    <dbReference type="NCBI Taxonomy" id="240015"/>
    <lineage>
        <taxon>Bacteria</taxon>
        <taxon>Pseudomonadati</taxon>
        <taxon>Acidobacteriota</taxon>
        <taxon>Terriglobia</taxon>
        <taxon>Terriglobales</taxon>
        <taxon>Acidobacteriaceae</taxon>
        <taxon>Acidobacterium</taxon>
    </lineage>
</organism>
<gene>
    <name evidence="1" type="primary">rplL</name>
    <name type="ordered locus">ACP_2927</name>
</gene>
<feature type="chain" id="PRO_1000195760" description="Large ribosomal subunit protein bL12">
    <location>
        <begin position="1"/>
        <end position="126"/>
    </location>
</feature>
<name>RL7_ACIC5</name>
<keyword id="KW-1185">Reference proteome</keyword>
<keyword id="KW-0687">Ribonucleoprotein</keyword>
<keyword id="KW-0689">Ribosomal protein</keyword>
<reference key="1">
    <citation type="journal article" date="2009" name="Appl. Environ. Microbiol.">
        <title>Three genomes from the phylum Acidobacteria provide insight into the lifestyles of these microorganisms in soils.</title>
        <authorList>
            <person name="Ward N.L."/>
            <person name="Challacombe J.F."/>
            <person name="Janssen P.H."/>
            <person name="Henrissat B."/>
            <person name="Coutinho P.M."/>
            <person name="Wu M."/>
            <person name="Xie G."/>
            <person name="Haft D.H."/>
            <person name="Sait M."/>
            <person name="Badger J."/>
            <person name="Barabote R.D."/>
            <person name="Bradley B."/>
            <person name="Brettin T.S."/>
            <person name="Brinkac L.M."/>
            <person name="Bruce D."/>
            <person name="Creasy T."/>
            <person name="Daugherty S.C."/>
            <person name="Davidsen T.M."/>
            <person name="DeBoy R.T."/>
            <person name="Detter J.C."/>
            <person name="Dodson R.J."/>
            <person name="Durkin A.S."/>
            <person name="Ganapathy A."/>
            <person name="Gwinn-Giglio M."/>
            <person name="Han C.S."/>
            <person name="Khouri H."/>
            <person name="Kiss H."/>
            <person name="Kothari S.P."/>
            <person name="Madupu R."/>
            <person name="Nelson K.E."/>
            <person name="Nelson W.C."/>
            <person name="Paulsen I."/>
            <person name="Penn K."/>
            <person name="Ren Q."/>
            <person name="Rosovitz M.J."/>
            <person name="Selengut J.D."/>
            <person name="Shrivastava S."/>
            <person name="Sullivan S.A."/>
            <person name="Tapia R."/>
            <person name="Thompson L.S."/>
            <person name="Watkins K.L."/>
            <person name="Yang Q."/>
            <person name="Yu C."/>
            <person name="Zafar N."/>
            <person name="Zhou L."/>
            <person name="Kuske C.R."/>
        </authorList>
    </citation>
    <scope>NUCLEOTIDE SEQUENCE [LARGE SCALE GENOMIC DNA]</scope>
    <source>
        <strain>ATCC 51196 / DSM 11244 / BCRC 80197 / JCM 7670 / NBRC 15755 / NCIMB 13165 / 161</strain>
    </source>
</reference>
<accession>C1F3Y2</accession>
<comment type="function">
    <text evidence="1">Forms part of the ribosomal stalk which helps the ribosome interact with GTP-bound translation factors. Is thus essential for accurate translation.</text>
</comment>
<comment type="subunit">
    <text evidence="1">Homodimer. Part of the ribosomal stalk of the 50S ribosomal subunit. Forms a multimeric L10(L12)X complex, where L10 forms an elongated spine to which 2 to 4 L12 dimers bind in a sequential fashion. Binds GTP-bound translation factors.</text>
</comment>
<comment type="similarity">
    <text evidence="1">Belongs to the bacterial ribosomal protein bL12 family.</text>
</comment>
<sequence length="126" mass="12920">MADLQQLEDQIVSLSLLDAAALVKKLEERLGVSAAAAAPVVVAGGAAGAGAAEAAAEQTEFTVILKDAGANKINTIKAVREVTALGLKEAKDLVDGAPKPLKENISKEDAEAIKKKFDGVATIEIK</sequence>
<dbReference type="EMBL" id="CP001472">
    <property type="protein sequence ID" value="ACO33907.1"/>
    <property type="molecule type" value="Genomic_DNA"/>
</dbReference>
<dbReference type="RefSeq" id="WP_015897977.1">
    <property type="nucleotide sequence ID" value="NC_012483.1"/>
</dbReference>
<dbReference type="SMR" id="C1F3Y2"/>
<dbReference type="FunCoup" id="C1F3Y2">
    <property type="interactions" value="628"/>
</dbReference>
<dbReference type="STRING" id="240015.ACP_2927"/>
<dbReference type="KEGG" id="aca:ACP_2927"/>
<dbReference type="eggNOG" id="COG0222">
    <property type="taxonomic scope" value="Bacteria"/>
</dbReference>
<dbReference type="HOGENOM" id="CLU_086499_3_2_0"/>
<dbReference type="InParanoid" id="C1F3Y2"/>
<dbReference type="OrthoDB" id="9811748at2"/>
<dbReference type="Proteomes" id="UP000002207">
    <property type="component" value="Chromosome"/>
</dbReference>
<dbReference type="GO" id="GO:0005737">
    <property type="term" value="C:cytoplasm"/>
    <property type="evidence" value="ECO:0007669"/>
    <property type="project" value="UniProtKB-ARBA"/>
</dbReference>
<dbReference type="GO" id="GO:1990904">
    <property type="term" value="C:ribonucleoprotein complex"/>
    <property type="evidence" value="ECO:0007669"/>
    <property type="project" value="UniProtKB-KW"/>
</dbReference>
<dbReference type="GO" id="GO:0005840">
    <property type="term" value="C:ribosome"/>
    <property type="evidence" value="ECO:0007669"/>
    <property type="project" value="UniProtKB-KW"/>
</dbReference>
<dbReference type="GO" id="GO:0003729">
    <property type="term" value="F:mRNA binding"/>
    <property type="evidence" value="ECO:0007669"/>
    <property type="project" value="TreeGrafter"/>
</dbReference>
<dbReference type="GO" id="GO:0003735">
    <property type="term" value="F:structural constituent of ribosome"/>
    <property type="evidence" value="ECO:0007669"/>
    <property type="project" value="InterPro"/>
</dbReference>
<dbReference type="GO" id="GO:0006412">
    <property type="term" value="P:translation"/>
    <property type="evidence" value="ECO:0007669"/>
    <property type="project" value="UniProtKB-UniRule"/>
</dbReference>
<dbReference type="CDD" id="cd00387">
    <property type="entry name" value="Ribosomal_L7_L12"/>
    <property type="match status" value="1"/>
</dbReference>
<dbReference type="FunFam" id="3.30.1390.10:FF:000001">
    <property type="entry name" value="50S ribosomal protein L7/L12"/>
    <property type="match status" value="1"/>
</dbReference>
<dbReference type="Gene3D" id="3.30.1390.10">
    <property type="match status" value="1"/>
</dbReference>
<dbReference type="Gene3D" id="1.20.5.710">
    <property type="entry name" value="Single helix bin"/>
    <property type="match status" value="1"/>
</dbReference>
<dbReference type="HAMAP" id="MF_00368">
    <property type="entry name" value="Ribosomal_bL12"/>
    <property type="match status" value="1"/>
</dbReference>
<dbReference type="InterPro" id="IPR000206">
    <property type="entry name" value="Ribosomal_bL12"/>
</dbReference>
<dbReference type="InterPro" id="IPR013823">
    <property type="entry name" value="Ribosomal_bL12_C"/>
</dbReference>
<dbReference type="InterPro" id="IPR014719">
    <property type="entry name" value="Ribosomal_bL12_C/ClpS-like"/>
</dbReference>
<dbReference type="InterPro" id="IPR008932">
    <property type="entry name" value="Ribosomal_bL12_oligo"/>
</dbReference>
<dbReference type="InterPro" id="IPR036235">
    <property type="entry name" value="Ribosomal_bL12_oligo_N_sf"/>
</dbReference>
<dbReference type="NCBIfam" id="TIGR00855">
    <property type="entry name" value="L12"/>
    <property type="match status" value="1"/>
</dbReference>
<dbReference type="PANTHER" id="PTHR45987">
    <property type="entry name" value="39S RIBOSOMAL PROTEIN L12"/>
    <property type="match status" value="1"/>
</dbReference>
<dbReference type="PANTHER" id="PTHR45987:SF4">
    <property type="entry name" value="LARGE RIBOSOMAL SUBUNIT PROTEIN BL12M"/>
    <property type="match status" value="1"/>
</dbReference>
<dbReference type="Pfam" id="PF00542">
    <property type="entry name" value="Ribosomal_L12"/>
    <property type="match status" value="1"/>
</dbReference>
<dbReference type="Pfam" id="PF16320">
    <property type="entry name" value="Ribosomal_L12_N"/>
    <property type="match status" value="1"/>
</dbReference>
<dbReference type="SUPFAM" id="SSF54736">
    <property type="entry name" value="ClpS-like"/>
    <property type="match status" value="1"/>
</dbReference>
<dbReference type="SUPFAM" id="SSF48300">
    <property type="entry name" value="Ribosomal protein L7/12, oligomerisation (N-terminal) domain"/>
    <property type="match status" value="1"/>
</dbReference>
<evidence type="ECO:0000255" key="1">
    <source>
        <dbReference type="HAMAP-Rule" id="MF_00368"/>
    </source>
</evidence>
<evidence type="ECO:0000305" key="2"/>
<protein>
    <recommendedName>
        <fullName evidence="1">Large ribosomal subunit protein bL12</fullName>
    </recommendedName>
    <alternativeName>
        <fullName evidence="2">50S ribosomal protein L7/L12</fullName>
    </alternativeName>
</protein>